<proteinExistence type="inferred from homology"/>
<name>MRAZ_STAS1</name>
<dbReference type="EMBL" id="AP008934">
    <property type="protein sequence ID" value="BAE18738.1"/>
    <property type="molecule type" value="Genomic_DNA"/>
</dbReference>
<dbReference type="RefSeq" id="WP_011303330.1">
    <property type="nucleotide sequence ID" value="NZ_MTGA01000034.1"/>
</dbReference>
<dbReference type="SMR" id="Q49WW0"/>
<dbReference type="GeneID" id="66867806"/>
<dbReference type="KEGG" id="ssp:SSP1593"/>
<dbReference type="eggNOG" id="COG2001">
    <property type="taxonomic scope" value="Bacteria"/>
</dbReference>
<dbReference type="HOGENOM" id="CLU_107907_0_5_9"/>
<dbReference type="OrthoDB" id="9807753at2"/>
<dbReference type="Proteomes" id="UP000006371">
    <property type="component" value="Chromosome"/>
</dbReference>
<dbReference type="GO" id="GO:0005737">
    <property type="term" value="C:cytoplasm"/>
    <property type="evidence" value="ECO:0007669"/>
    <property type="project" value="UniProtKB-UniRule"/>
</dbReference>
<dbReference type="GO" id="GO:0009295">
    <property type="term" value="C:nucleoid"/>
    <property type="evidence" value="ECO:0007669"/>
    <property type="project" value="UniProtKB-SubCell"/>
</dbReference>
<dbReference type="GO" id="GO:0003700">
    <property type="term" value="F:DNA-binding transcription factor activity"/>
    <property type="evidence" value="ECO:0007669"/>
    <property type="project" value="UniProtKB-UniRule"/>
</dbReference>
<dbReference type="GO" id="GO:0000976">
    <property type="term" value="F:transcription cis-regulatory region binding"/>
    <property type="evidence" value="ECO:0007669"/>
    <property type="project" value="TreeGrafter"/>
</dbReference>
<dbReference type="GO" id="GO:2000143">
    <property type="term" value="P:negative regulation of DNA-templated transcription initiation"/>
    <property type="evidence" value="ECO:0007669"/>
    <property type="project" value="TreeGrafter"/>
</dbReference>
<dbReference type="CDD" id="cd16321">
    <property type="entry name" value="MraZ_C"/>
    <property type="match status" value="1"/>
</dbReference>
<dbReference type="CDD" id="cd16320">
    <property type="entry name" value="MraZ_N"/>
    <property type="match status" value="1"/>
</dbReference>
<dbReference type="FunFam" id="3.40.1550.20:FF:000002">
    <property type="entry name" value="Transcriptional regulator MraZ"/>
    <property type="match status" value="1"/>
</dbReference>
<dbReference type="Gene3D" id="3.40.1550.20">
    <property type="entry name" value="Transcriptional regulator MraZ domain"/>
    <property type="match status" value="1"/>
</dbReference>
<dbReference type="HAMAP" id="MF_01008">
    <property type="entry name" value="MraZ"/>
    <property type="match status" value="1"/>
</dbReference>
<dbReference type="InterPro" id="IPR003444">
    <property type="entry name" value="MraZ"/>
</dbReference>
<dbReference type="InterPro" id="IPR035644">
    <property type="entry name" value="MraZ_C"/>
</dbReference>
<dbReference type="InterPro" id="IPR020603">
    <property type="entry name" value="MraZ_dom"/>
</dbReference>
<dbReference type="InterPro" id="IPR035642">
    <property type="entry name" value="MraZ_N"/>
</dbReference>
<dbReference type="InterPro" id="IPR038619">
    <property type="entry name" value="MraZ_sf"/>
</dbReference>
<dbReference type="InterPro" id="IPR007159">
    <property type="entry name" value="SpoVT-AbrB_dom"/>
</dbReference>
<dbReference type="InterPro" id="IPR037914">
    <property type="entry name" value="SpoVT-AbrB_sf"/>
</dbReference>
<dbReference type="NCBIfam" id="TIGR00242">
    <property type="entry name" value="division/cell wall cluster transcriptional repressor MraZ"/>
    <property type="match status" value="1"/>
</dbReference>
<dbReference type="PANTHER" id="PTHR34701">
    <property type="entry name" value="TRANSCRIPTIONAL REGULATOR MRAZ"/>
    <property type="match status" value="1"/>
</dbReference>
<dbReference type="PANTHER" id="PTHR34701:SF1">
    <property type="entry name" value="TRANSCRIPTIONAL REGULATOR MRAZ"/>
    <property type="match status" value="1"/>
</dbReference>
<dbReference type="Pfam" id="PF02381">
    <property type="entry name" value="MraZ"/>
    <property type="match status" value="2"/>
</dbReference>
<dbReference type="SUPFAM" id="SSF89447">
    <property type="entry name" value="AbrB/MazE/MraZ-like"/>
    <property type="match status" value="1"/>
</dbReference>
<dbReference type="PROSITE" id="PS51740">
    <property type="entry name" value="SPOVT_ABRB"/>
    <property type="match status" value="2"/>
</dbReference>
<keyword id="KW-0963">Cytoplasm</keyword>
<keyword id="KW-0238">DNA-binding</keyword>
<keyword id="KW-1185">Reference proteome</keyword>
<keyword id="KW-0677">Repeat</keyword>
<keyword id="KW-0804">Transcription</keyword>
<keyword id="KW-0805">Transcription regulation</keyword>
<reference key="1">
    <citation type="journal article" date="2005" name="Proc. Natl. Acad. Sci. U.S.A.">
        <title>Whole genome sequence of Staphylococcus saprophyticus reveals the pathogenesis of uncomplicated urinary tract infection.</title>
        <authorList>
            <person name="Kuroda M."/>
            <person name="Yamashita A."/>
            <person name="Hirakawa H."/>
            <person name="Kumano M."/>
            <person name="Morikawa K."/>
            <person name="Higashide M."/>
            <person name="Maruyama A."/>
            <person name="Inose Y."/>
            <person name="Matoba K."/>
            <person name="Toh H."/>
            <person name="Kuhara S."/>
            <person name="Hattori M."/>
            <person name="Ohta T."/>
        </authorList>
    </citation>
    <scope>NUCLEOTIDE SEQUENCE [LARGE SCALE GENOMIC DNA]</scope>
    <source>
        <strain>ATCC 15305 / DSM 20229 / NCIMB 8711 / NCTC 7292 / S-41</strain>
    </source>
</reference>
<organism>
    <name type="scientific">Staphylococcus saprophyticus subsp. saprophyticus (strain ATCC 15305 / DSM 20229 / NCIMB 8711 / NCTC 7292 / S-41)</name>
    <dbReference type="NCBI Taxonomy" id="342451"/>
    <lineage>
        <taxon>Bacteria</taxon>
        <taxon>Bacillati</taxon>
        <taxon>Bacillota</taxon>
        <taxon>Bacilli</taxon>
        <taxon>Bacillales</taxon>
        <taxon>Staphylococcaceae</taxon>
        <taxon>Staphylococcus</taxon>
    </lineage>
</organism>
<feature type="chain" id="PRO_0000230113" description="Transcriptional regulator MraZ">
    <location>
        <begin position="1"/>
        <end position="143"/>
    </location>
</feature>
<feature type="domain" description="SpoVT-AbrB 1" evidence="2">
    <location>
        <begin position="5"/>
        <end position="47"/>
    </location>
</feature>
<feature type="domain" description="SpoVT-AbrB 2" evidence="2">
    <location>
        <begin position="76"/>
        <end position="119"/>
    </location>
</feature>
<evidence type="ECO:0000255" key="1">
    <source>
        <dbReference type="HAMAP-Rule" id="MF_01008"/>
    </source>
</evidence>
<evidence type="ECO:0000255" key="2">
    <source>
        <dbReference type="PROSITE-ProRule" id="PRU01076"/>
    </source>
</evidence>
<sequence length="143" mass="17140">MFMGEYEHQLDTKGRMIVPSKFRYDLNERFIITRGLDKCLFGYTLEEWQVIEEKMKTLPMTKKDARKFMRMFFSGAVEVELDKQGRINIPQNLRQYANLSKECTVIGVSNRIEIWDRETWSSFYDESEESFEDIAEDLIDFDF</sequence>
<accession>Q49WW0</accession>
<comment type="subunit">
    <text evidence="1">Forms oligomers.</text>
</comment>
<comment type="subcellular location">
    <subcellularLocation>
        <location evidence="1">Cytoplasm</location>
        <location evidence="1">Nucleoid</location>
    </subcellularLocation>
</comment>
<comment type="similarity">
    <text evidence="1">Belongs to the MraZ family.</text>
</comment>
<protein>
    <recommendedName>
        <fullName>Transcriptional regulator MraZ</fullName>
    </recommendedName>
</protein>
<gene>
    <name evidence="1" type="primary">mraZ</name>
    <name type="ordered locus">SSP1593</name>
</gene>